<organism>
    <name type="scientific">Coccidioides immitis (strain RS)</name>
    <name type="common">Valley fever fungus</name>
    <dbReference type="NCBI Taxonomy" id="246410"/>
    <lineage>
        <taxon>Eukaryota</taxon>
        <taxon>Fungi</taxon>
        <taxon>Dikarya</taxon>
        <taxon>Ascomycota</taxon>
        <taxon>Pezizomycotina</taxon>
        <taxon>Eurotiomycetes</taxon>
        <taxon>Eurotiomycetidae</taxon>
        <taxon>Onygenales</taxon>
        <taxon>Onygenaceae</taxon>
        <taxon>Coccidioides</taxon>
    </lineage>
</organism>
<accession>Q1EBD3</accession>
<accession>J3KGA1</accession>
<evidence type="ECO:0000250" key="1">
    <source>
        <dbReference type="UniProtKB" id="P53323"/>
    </source>
</evidence>
<evidence type="ECO:0000250" key="2">
    <source>
        <dbReference type="UniProtKB" id="Q9UYB9"/>
    </source>
</evidence>
<evidence type="ECO:0000255" key="3">
    <source>
        <dbReference type="PROSITE-ProRule" id="PRU00159"/>
    </source>
</evidence>
<evidence type="ECO:0000255" key="4">
    <source>
        <dbReference type="PROSITE-ProRule" id="PRU10028"/>
    </source>
</evidence>
<evidence type="ECO:0000256" key="5">
    <source>
        <dbReference type="SAM" id="MobiDB-lite"/>
    </source>
</evidence>
<evidence type="ECO:0000305" key="6"/>
<feature type="chain" id="PRO_0000278911" description="EKC/KEOPS complex subunit BUD32">
    <location>
        <begin position="1"/>
        <end position="287"/>
    </location>
</feature>
<feature type="domain" description="Protein kinase" evidence="3">
    <location>
        <begin position="18"/>
        <end position="287"/>
    </location>
</feature>
<feature type="region of interest" description="Disordered" evidence="5">
    <location>
        <begin position="1"/>
        <end position="20"/>
    </location>
</feature>
<feature type="compositionally biased region" description="Pro residues" evidence="5">
    <location>
        <begin position="1"/>
        <end position="14"/>
    </location>
</feature>
<feature type="active site" description="Proton acceptor" evidence="3 4">
    <location>
        <position position="179"/>
    </location>
</feature>
<feature type="binding site" evidence="3">
    <location>
        <begin position="24"/>
        <end position="32"/>
    </location>
    <ligand>
        <name>ATP</name>
        <dbReference type="ChEBI" id="CHEBI:30616"/>
    </ligand>
</feature>
<feature type="binding site" evidence="3">
    <location>
        <position position="47"/>
    </location>
    <ligand>
        <name>ATP</name>
        <dbReference type="ChEBI" id="CHEBI:30616"/>
    </ligand>
</feature>
<protein>
    <recommendedName>
        <fullName>EKC/KEOPS complex subunit BUD32</fullName>
        <ecNumber evidence="2">3.6.-.-</ecNumber>
    </recommendedName>
    <alternativeName>
        <fullName>Atypical serine/threonine protein kinase BUD32</fullName>
        <ecNumber evidence="1">2.7.11.1</ecNumber>
    </alternativeName>
</protein>
<proteinExistence type="inferred from homology"/>
<gene>
    <name type="primary">BUD32</name>
    <name type="ORF">CIMG_00130</name>
</gene>
<sequence length="287" mass="32238">MTEEFTPPPLPPPFTSNKTPPVLLAQGAEARLYKTDFLNPSFPAALKFRPSKPYRHPILDRRLTRQRVLQEARCLVKLLKEGIPVPGVLSVDWNTGQGEDETGNGGAWLLMEWIEGPAVRQVVNHWEKWMKHCESATKGNNSGMNENFERSAEEDIRSLLRRIGRVIGALHKAGVIHGDLTTSNLILRGQSNENTTNIDPHSTTLKPNLEGEIVLIDFGLASQSVQDEDRAVDLYVLERAFGSSHPRTEIFFDEVLKAYRESFKGASSVLETLKKVRMRGRKRSMVG</sequence>
<keyword id="KW-0010">Activator</keyword>
<keyword id="KW-0067">ATP-binding</keyword>
<keyword id="KW-0158">Chromosome</keyword>
<keyword id="KW-0963">Cytoplasm</keyword>
<keyword id="KW-0378">Hydrolase</keyword>
<keyword id="KW-0418">Kinase</keyword>
<keyword id="KW-0547">Nucleotide-binding</keyword>
<keyword id="KW-0539">Nucleus</keyword>
<keyword id="KW-0597">Phosphoprotein</keyword>
<keyword id="KW-1185">Reference proteome</keyword>
<keyword id="KW-0723">Serine/threonine-protein kinase</keyword>
<keyword id="KW-0779">Telomere</keyword>
<keyword id="KW-0804">Transcription</keyword>
<keyword id="KW-0805">Transcription regulation</keyword>
<keyword id="KW-0808">Transferase</keyword>
<keyword id="KW-0819">tRNA processing</keyword>
<comment type="function">
    <text evidence="1">Component of the EKC/KEOPS complex that is required for the formation of a threonylcarbamoyl group on adenosine at position 37 (t(6)A37) in tRNAs that read codons beginning with adenine. The complex is probably involved in the transfer of the threonylcarbamoyl moiety of threonylcarbamoyl-AMP (TC-AMP) to the N6 group of A37. BUD32 has ATPase activity in the context of the EKC/KEOPS complex and likely plays a supporting role to the catalytic subunit KAE1. The EKC/KEOPS complex also promotes both telomere uncapping and telomere elongation. The complex is required for efficient recruitment of transcriptional coactivators.</text>
</comment>
<comment type="catalytic activity">
    <reaction evidence="1">
        <text>L-seryl-[protein] + ATP = O-phospho-L-seryl-[protein] + ADP + H(+)</text>
        <dbReference type="Rhea" id="RHEA:17989"/>
        <dbReference type="Rhea" id="RHEA-COMP:9863"/>
        <dbReference type="Rhea" id="RHEA-COMP:11604"/>
        <dbReference type="ChEBI" id="CHEBI:15378"/>
        <dbReference type="ChEBI" id="CHEBI:29999"/>
        <dbReference type="ChEBI" id="CHEBI:30616"/>
        <dbReference type="ChEBI" id="CHEBI:83421"/>
        <dbReference type="ChEBI" id="CHEBI:456216"/>
        <dbReference type="EC" id="2.7.11.1"/>
    </reaction>
</comment>
<comment type="catalytic activity">
    <reaction evidence="1">
        <text>L-threonyl-[protein] + ATP = O-phospho-L-threonyl-[protein] + ADP + H(+)</text>
        <dbReference type="Rhea" id="RHEA:46608"/>
        <dbReference type="Rhea" id="RHEA-COMP:11060"/>
        <dbReference type="Rhea" id="RHEA-COMP:11605"/>
        <dbReference type="ChEBI" id="CHEBI:15378"/>
        <dbReference type="ChEBI" id="CHEBI:30013"/>
        <dbReference type="ChEBI" id="CHEBI:30616"/>
        <dbReference type="ChEBI" id="CHEBI:61977"/>
        <dbReference type="ChEBI" id="CHEBI:456216"/>
        <dbReference type="EC" id="2.7.11.1"/>
    </reaction>
</comment>
<comment type="subunit">
    <text evidence="1">Component of the EKC/KEOPS complex composed of at least BUD32, CGI121, GON7, KAE1 and PCC1; the whole complex dimerizes.</text>
</comment>
<comment type="subcellular location">
    <subcellularLocation>
        <location evidence="1">Cytoplasm</location>
    </subcellularLocation>
    <subcellularLocation>
        <location evidence="1">Nucleus</location>
    </subcellularLocation>
    <subcellularLocation>
        <location evidence="1">Chromosome</location>
        <location evidence="1">Telomere</location>
    </subcellularLocation>
</comment>
<comment type="domain">
    <text evidence="1 2">This protein is considered an atypical serine/threonine kinase, because it lacks the conventional structural elements necessary for the substrate recognition as well as a lysine residue that in all other serine/threonine kinases participates in the catalytic event (By similarity). BUD32 has protein kinase activity in vitro, but in the context of the EKC/KEOPS complex, the catalytic subunit KAE1 switches the activity of BUD32 from kinase into ATPase (By similarity).</text>
</comment>
<comment type="similarity">
    <text evidence="6">Belongs to the protein kinase superfamily. BUD32 family.</text>
</comment>
<reference key="1">
    <citation type="journal article" date="2009" name="Genome Res.">
        <title>Comparative genomic analyses of the human fungal pathogens Coccidioides and their relatives.</title>
        <authorList>
            <person name="Sharpton T.J."/>
            <person name="Stajich J.E."/>
            <person name="Rounsley S.D."/>
            <person name="Gardner M.J."/>
            <person name="Wortman J.R."/>
            <person name="Jordar V.S."/>
            <person name="Maiti R."/>
            <person name="Kodira C.D."/>
            <person name="Neafsey D.E."/>
            <person name="Zeng Q."/>
            <person name="Hung C.-Y."/>
            <person name="McMahan C."/>
            <person name="Muszewska A."/>
            <person name="Grynberg M."/>
            <person name="Mandel M.A."/>
            <person name="Kellner E.M."/>
            <person name="Barker B.M."/>
            <person name="Galgiani J.N."/>
            <person name="Orbach M.J."/>
            <person name="Kirkland T.N."/>
            <person name="Cole G.T."/>
            <person name="Henn M.R."/>
            <person name="Birren B.W."/>
            <person name="Taylor J.W."/>
        </authorList>
    </citation>
    <scope>NUCLEOTIDE SEQUENCE [LARGE SCALE GENOMIC DNA]</scope>
    <source>
        <strain>RS</strain>
    </source>
</reference>
<reference key="2">
    <citation type="journal article" date="2010" name="Genome Res.">
        <title>Population genomic sequencing of Coccidioides fungi reveals recent hybridization and transposon control.</title>
        <authorList>
            <person name="Neafsey D.E."/>
            <person name="Barker B.M."/>
            <person name="Sharpton T.J."/>
            <person name="Stajich J.E."/>
            <person name="Park D.J."/>
            <person name="Whiston E."/>
            <person name="Hung C.-Y."/>
            <person name="McMahan C."/>
            <person name="White J."/>
            <person name="Sykes S."/>
            <person name="Heiman D."/>
            <person name="Young S."/>
            <person name="Zeng Q."/>
            <person name="Abouelleil A."/>
            <person name="Aftuck L."/>
            <person name="Bessette D."/>
            <person name="Brown A."/>
            <person name="FitzGerald M."/>
            <person name="Lui A."/>
            <person name="Macdonald J.P."/>
            <person name="Priest M."/>
            <person name="Orbach M.J."/>
            <person name="Galgiani J.N."/>
            <person name="Kirkland T.N."/>
            <person name="Cole G.T."/>
            <person name="Birren B.W."/>
            <person name="Henn M.R."/>
            <person name="Taylor J.W."/>
            <person name="Rounsley S.D."/>
        </authorList>
    </citation>
    <scope>GENOME REANNOTATION</scope>
    <source>
        <strain>RS</strain>
    </source>
</reference>
<dbReference type="EC" id="3.6.-.-" evidence="2"/>
<dbReference type="EC" id="2.7.11.1" evidence="1"/>
<dbReference type="EMBL" id="GG704911">
    <property type="protein sequence ID" value="EAS34776.3"/>
    <property type="molecule type" value="Genomic_DNA"/>
</dbReference>
<dbReference type="RefSeq" id="XP_001246359.1">
    <property type="nucleotide sequence ID" value="XM_001246358.2"/>
</dbReference>
<dbReference type="SMR" id="Q1EBD3"/>
<dbReference type="FunCoup" id="Q1EBD3">
    <property type="interactions" value="842"/>
</dbReference>
<dbReference type="STRING" id="246410.Q1EBD3"/>
<dbReference type="GeneID" id="4566375"/>
<dbReference type="KEGG" id="cim:CIMG_00130"/>
<dbReference type="VEuPathDB" id="FungiDB:CIMG_00130"/>
<dbReference type="InParanoid" id="Q1EBD3"/>
<dbReference type="OMA" id="HKLYMEY"/>
<dbReference type="OrthoDB" id="3399at2759"/>
<dbReference type="Proteomes" id="UP000001261">
    <property type="component" value="Unassembled WGS sequence"/>
</dbReference>
<dbReference type="GO" id="GO:0000781">
    <property type="term" value="C:chromosome, telomeric region"/>
    <property type="evidence" value="ECO:0007669"/>
    <property type="project" value="UniProtKB-SubCell"/>
</dbReference>
<dbReference type="GO" id="GO:0005829">
    <property type="term" value="C:cytosol"/>
    <property type="evidence" value="ECO:0007669"/>
    <property type="project" value="TreeGrafter"/>
</dbReference>
<dbReference type="GO" id="GO:0000408">
    <property type="term" value="C:EKC/KEOPS complex"/>
    <property type="evidence" value="ECO:0007669"/>
    <property type="project" value="TreeGrafter"/>
</dbReference>
<dbReference type="GO" id="GO:0005634">
    <property type="term" value="C:nucleus"/>
    <property type="evidence" value="ECO:0007669"/>
    <property type="project" value="UniProtKB-SubCell"/>
</dbReference>
<dbReference type="GO" id="GO:0005524">
    <property type="term" value="F:ATP binding"/>
    <property type="evidence" value="ECO:0007669"/>
    <property type="project" value="UniProtKB-KW"/>
</dbReference>
<dbReference type="GO" id="GO:0016787">
    <property type="term" value="F:hydrolase activity"/>
    <property type="evidence" value="ECO:0007669"/>
    <property type="project" value="UniProtKB-KW"/>
</dbReference>
<dbReference type="GO" id="GO:0106310">
    <property type="term" value="F:protein serine kinase activity"/>
    <property type="evidence" value="ECO:0007669"/>
    <property type="project" value="RHEA"/>
</dbReference>
<dbReference type="GO" id="GO:0004674">
    <property type="term" value="F:protein serine/threonine kinase activity"/>
    <property type="evidence" value="ECO:0007669"/>
    <property type="project" value="UniProtKB-KW"/>
</dbReference>
<dbReference type="GO" id="GO:0008033">
    <property type="term" value="P:tRNA processing"/>
    <property type="evidence" value="ECO:0007669"/>
    <property type="project" value="UniProtKB-KW"/>
</dbReference>
<dbReference type="GO" id="GO:0070525">
    <property type="term" value="P:tRNA threonylcarbamoyladenosine metabolic process"/>
    <property type="evidence" value="ECO:0007669"/>
    <property type="project" value="TreeGrafter"/>
</dbReference>
<dbReference type="FunFam" id="3.30.200.20:FF:000603">
    <property type="entry name" value="EKC/KEOPS complex subunit bud32"/>
    <property type="match status" value="1"/>
</dbReference>
<dbReference type="FunFam" id="1.10.510.10:FF:000845">
    <property type="entry name" value="Probable bifunctional tRNA threonylcarbamoyladenosine biosynthesis protein"/>
    <property type="match status" value="1"/>
</dbReference>
<dbReference type="Gene3D" id="3.30.200.20">
    <property type="entry name" value="Phosphorylase Kinase, domain 1"/>
    <property type="match status" value="1"/>
</dbReference>
<dbReference type="Gene3D" id="1.10.510.10">
    <property type="entry name" value="Transferase(Phosphotransferase) domain 1"/>
    <property type="match status" value="1"/>
</dbReference>
<dbReference type="InterPro" id="IPR011009">
    <property type="entry name" value="Kinase-like_dom_sf"/>
</dbReference>
<dbReference type="InterPro" id="IPR000719">
    <property type="entry name" value="Prot_kinase_dom"/>
</dbReference>
<dbReference type="InterPro" id="IPR008266">
    <property type="entry name" value="Tyr_kinase_AS"/>
</dbReference>
<dbReference type="PANTHER" id="PTHR12209:SF0">
    <property type="entry name" value="EKC_KEOPS COMPLEX SUBUNIT TP53RK"/>
    <property type="match status" value="1"/>
</dbReference>
<dbReference type="PANTHER" id="PTHR12209">
    <property type="entry name" value="NON-SPECIFIC SERINE/THREONINE PROTEIN KINASE"/>
    <property type="match status" value="1"/>
</dbReference>
<dbReference type="Pfam" id="PF06293">
    <property type="entry name" value="Kdo"/>
    <property type="match status" value="1"/>
</dbReference>
<dbReference type="SUPFAM" id="SSF56112">
    <property type="entry name" value="Protein kinase-like (PK-like)"/>
    <property type="match status" value="1"/>
</dbReference>
<dbReference type="PROSITE" id="PS50011">
    <property type="entry name" value="PROTEIN_KINASE_DOM"/>
    <property type="match status" value="1"/>
</dbReference>
<dbReference type="PROSITE" id="PS00109">
    <property type="entry name" value="PROTEIN_KINASE_TYR"/>
    <property type="match status" value="1"/>
</dbReference>
<name>BUD32_COCIM</name>